<accession>P57439</accession>
<reference key="1">
    <citation type="journal article" date="2000" name="Nature">
        <title>Genome sequence of the endocellular bacterial symbiont of aphids Buchnera sp. APS.</title>
        <authorList>
            <person name="Shigenobu S."/>
            <person name="Watanabe H."/>
            <person name="Hattori M."/>
            <person name="Sakaki Y."/>
            <person name="Ishikawa H."/>
        </authorList>
    </citation>
    <scope>NUCLEOTIDE SEQUENCE [LARGE SCALE GENOMIC DNA]</scope>
    <source>
        <strain>APS</strain>
    </source>
</reference>
<keyword id="KW-1185">Reference proteome</keyword>
<feature type="chain" id="PRO_0000216252" description="Uncharacterized protein BU358">
    <location>
        <begin position="1"/>
        <end position="169"/>
    </location>
</feature>
<protein>
    <recommendedName>
        <fullName>Uncharacterized protein BU358</fullName>
    </recommendedName>
</protein>
<gene>
    <name type="ordered locus">BU358</name>
</gene>
<sequence length="169" mass="20006">MILFIIFFINSCSYSKNIENTFSKVKKTNFILLKFDSAIEKIISEMLKPNHILIFNKKLFFIDLLENQTNIFIDREKITDLIKHKISIKNNDIHFLEKNMIKKNKKKIGILEIKKSLDTSTAIFFSRNNNVEYYIHSCISGKNEPFLLKIELILVKTGEIVFMKEERCY</sequence>
<name>Y358_BUCAI</name>
<dbReference type="EMBL" id="BA000003">
    <property type="protein sequence ID" value="BAB13062.1"/>
    <property type="molecule type" value="Genomic_DNA"/>
</dbReference>
<dbReference type="RefSeq" id="NP_240176.1">
    <property type="nucleotide sequence ID" value="NC_002528.1"/>
</dbReference>
<dbReference type="SMR" id="P57439"/>
<dbReference type="STRING" id="563178.BUAP5A_351"/>
<dbReference type="EnsemblBacteria" id="BAB13062">
    <property type="protein sequence ID" value="BAB13062"/>
    <property type="gene ID" value="BAB13062"/>
</dbReference>
<dbReference type="KEGG" id="buc:BU358"/>
<dbReference type="PATRIC" id="fig|107806.10.peg.371"/>
<dbReference type="eggNOG" id="COG3417">
    <property type="taxonomic scope" value="Bacteria"/>
</dbReference>
<dbReference type="HOGENOM" id="CLU_1773871_0_0_6"/>
<dbReference type="BioCyc" id="BAPH107806:GBZJ-351-MONOMER"/>
<dbReference type="Proteomes" id="UP000001806">
    <property type="component" value="Chromosome"/>
</dbReference>
<dbReference type="GO" id="GO:0031241">
    <property type="term" value="C:periplasmic side of cell outer membrane"/>
    <property type="evidence" value="ECO:0007669"/>
    <property type="project" value="TreeGrafter"/>
</dbReference>
<dbReference type="GO" id="GO:0030234">
    <property type="term" value="F:enzyme regulator activity"/>
    <property type="evidence" value="ECO:0007669"/>
    <property type="project" value="TreeGrafter"/>
</dbReference>
<dbReference type="GO" id="GO:0009252">
    <property type="term" value="P:peptidoglycan biosynthetic process"/>
    <property type="evidence" value="ECO:0007669"/>
    <property type="project" value="TreeGrafter"/>
</dbReference>
<dbReference type="Gene3D" id="3.40.50.10610">
    <property type="entry name" value="ABC-type transport auxiliary lipoprotein component"/>
    <property type="match status" value="1"/>
</dbReference>
<dbReference type="InterPro" id="IPR014094">
    <property type="entry name" value="LpoB"/>
</dbReference>
<dbReference type="PANTHER" id="PTHR40593">
    <property type="entry name" value="PENICILLIN-BINDING PROTEIN ACTIVATOR LPOB"/>
    <property type="match status" value="1"/>
</dbReference>
<dbReference type="PANTHER" id="PTHR40593:SF1">
    <property type="entry name" value="PENICILLIN-BINDING PROTEIN ACTIVATOR LPOB"/>
    <property type="match status" value="1"/>
</dbReference>
<dbReference type="Pfam" id="PF13036">
    <property type="entry name" value="LpoB"/>
    <property type="match status" value="1"/>
</dbReference>
<proteinExistence type="predicted"/>
<organism>
    <name type="scientific">Buchnera aphidicola subsp. Acyrthosiphon pisum (strain APS)</name>
    <name type="common">Acyrthosiphon pisum symbiotic bacterium</name>
    <dbReference type="NCBI Taxonomy" id="107806"/>
    <lineage>
        <taxon>Bacteria</taxon>
        <taxon>Pseudomonadati</taxon>
        <taxon>Pseudomonadota</taxon>
        <taxon>Gammaproteobacteria</taxon>
        <taxon>Enterobacterales</taxon>
        <taxon>Erwiniaceae</taxon>
        <taxon>Buchnera</taxon>
    </lineage>
</organism>